<organism>
    <name type="scientific">Drosophila melanogaster</name>
    <name type="common">Fruit fly</name>
    <dbReference type="NCBI Taxonomy" id="7227"/>
    <lineage>
        <taxon>Eukaryota</taxon>
        <taxon>Metazoa</taxon>
        <taxon>Ecdysozoa</taxon>
        <taxon>Arthropoda</taxon>
        <taxon>Hexapoda</taxon>
        <taxon>Insecta</taxon>
        <taxon>Pterygota</taxon>
        <taxon>Neoptera</taxon>
        <taxon>Endopterygota</taxon>
        <taxon>Diptera</taxon>
        <taxon>Brachycera</taxon>
        <taxon>Muscomorpha</taxon>
        <taxon>Ephydroidea</taxon>
        <taxon>Drosophilidae</taxon>
        <taxon>Drosophila</taxon>
        <taxon>Sophophora</taxon>
    </lineage>
</organism>
<name>KPC2_DROME</name>
<accession>P13677</accession>
<accession>Q9V7V5</accession>
<reference key="1">
    <citation type="journal article" date="1989" name="Cell">
        <title>Isolation and characterization of two new Drosophila protein kinase C genes, including one specifically expressed in photoreceptor cells.</title>
        <authorList>
            <person name="Schaeffer E."/>
            <person name="Smith D."/>
            <person name="Mardon G."/>
            <person name="Quinn W."/>
            <person name="Zuker C."/>
        </authorList>
    </citation>
    <scope>NUCLEOTIDE SEQUENCE [MRNA]</scope>
    <scope>TISSUE SPECIFICITY</scope>
    <scope>DEVELOPMENTAL STAGE</scope>
</reference>
<reference key="2">
    <citation type="journal article" date="2000" name="Science">
        <title>The genome sequence of Drosophila melanogaster.</title>
        <authorList>
            <person name="Adams M.D."/>
            <person name="Celniker S.E."/>
            <person name="Holt R.A."/>
            <person name="Evans C.A."/>
            <person name="Gocayne J.D."/>
            <person name="Amanatides P.G."/>
            <person name="Scherer S.E."/>
            <person name="Li P.W."/>
            <person name="Hoskins R.A."/>
            <person name="Galle R.F."/>
            <person name="George R.A."/>
            <person name="Lewis S.E."/>
            <person name="Richards S."/>
            <person name="Ashburner M."/>
            <person name="Henderson S.N."/>
            <person name="Sutton G.G."/>
            <person name="Wortman J.R."/>
            <person name="Yandell M.D."/>
            <person name="Zhang Q."/>
            <person name="Chen L.X."/>
            <person name="Brandon R.C."/>
            <person name="Rogers Y.-H.C."/>
            <person name="Blazej R.G."/>
            <person name="Champe M."/>
            <person name="Pfeiffer B.D."/>
            <person name="Wan K.H."/>
            <person name="Doyle C."/>
            <person name="Baxter E.G."/>
            <person name="Helt G."/>
            <person name="Nelson C.R."/>
            <person name="Miklos G.L.G."/>
            <person name="Abril J.F."/>
            <person name="Agbayani A."/>
            <person name="An H.-J."/>
            <person name="Andrews-Pfannkoch C."/>
            <person name="Baldwin D."/>
            <person name="Ballew R.M."/>
            <person name="Basu A."/>
            <person name="Baxendale J."/>
            <person name="Bayraktaroglu L."/>
            <person name="Beasley E.M."/>
            <person name="Beeson K.Y."/>
            <person name="Benos P.V."/>
            <person name="Berman B.P."/>
            <person name="Bhandari D."/>
            <person name="Bolshakov S."/>
            <person name="Borkova D."/>
            <person name="Botchan M.R."/>
            <person name="Bouck J."/>
            <person name="Brokstein P."/>
            <person name="Brottier P."/>
            <person name="Burtis K.C."/>
            <person name="Busam D.A."/>
            <person name="Butler H."/>
            <person name="Cadieu E."/>
            <person name="Center A."/>
            <person name="Chandra I."/>
            <person name="Cherry J.M."/>
            <person name="Cawley S."/>
            <person name="Dahlke C."/>
            <person name="Davenport L.B."/>
            <person name="Davies P."/>
            <person name="de Pablos B."/>
            <person name="Delcher A."/>
            <person name="Deng Z."/>
            <person name="Mays A.D."/>
            <person name="Dew I."/>
            <person name="Dietz S.M."/>
            <person name="Dodson K."/>
            <person name="Doup L.E."/>
            <person name="Downes M."/>
            <person name="Dugan-Rocha S."/>
            <person name="Dunkov B.C."/>
            <person name="Dunn P."/>
            <person name="Durbin K.J."/>
            <person name="Evangelista C.C."/>
            <person name="Ferraz C."/>
            <person name="Ferriera S."/>
            <person name="Fleischmann W."/>
            <person name="Fosler C."/>
            <person name="Gabrielian A.E."/>
            <person name="Garg N.S."/>
            <person name="Gelbart W.M."/>
            <person name="Glasser K."/>
            <person name="Glodek A."/>
            <person name="Gong F."/>
            <person name="Gorrell J.H."/>
            <person name="Gu Z."/>
            <person name="Guan P."/>
            <person name="Harris M."/>
            <person name="Harris N.L."/>
            <person name="Harvey D.A."/>
            <person name="Heiman T.J."/>
            <person name="Hernandez J.R."/>
            <person name="Houck J."/>
            <person name="Hostin D."/>
            <person name="Houston K.A."/>
            <person name="Howland T.J."/>
            <person name="Wei M.-H."/>
            <person name="Ibegwam C."/>
            <person name="Jalali M."/>
            <person name="Kalush F."/>
            <person name="Karpen G.H."/>
            <person name="Ke Z."/>
            <person name="Kennison J.A."/>
            <person name="Ketchum K.A."/>
            <person name="Kimmel B.E."/>
            <person name="Kodira C.D."/>
            <person name="Kraft C.L."/>
            <person name="Kravitz S."/>
            <person name="Kulp D."/>
            <person name="Lai Z."/>
            <person name="Lasko P."/>
            <person name="Lei Y."/>
            <person name="Levitsky A.A."/>
            <person name="Li J.H."/>
            <person name="Li Z."/>
            <person name="Liang Y."/>
            <person name="Lin X."/>
            <person name="Liu X."/>
            <person name="Mattei B."/>
            <person name="McIntosh T.C."/>
            <person name="McLeod M.P."/>
            <person name="McPherson D."/>
            <person name="Merkulov G."/>
            <person name="Milshina N.V."/>
            <person name="Mobarry C."/>
            <person name="Morris J."/>
            <person name="Moshrefi A."/>
            <person name="Mount S.M."/>
            <person name="Moy M."/>
            <person name="Murphy B."/>
            <person name="Murphy L."/>
            <person name="Muzny D.M."/>
            <person name="Nelson D.L."/>
            <person name="Nelson D.R."/>
            <person name="Nelson K.A."/>
            <person name="Nixon K."/>
            <person name="Nusskern D.R."/>
            <person name="Pacleb J.M."/>
            <person name="Palazzolo M."/>
            <person name="Pittman G.S."/>
            <person name="Pan S."/>
            <person name="Pollard J."/>
            <person name="Puri V."/>
            <person name="Reese M.G."/>
            <person name="Reinert K."/>
            <person name="Remington K."/>
            <person name="Saunders R.D.C."/>
            <person name="Scheeler F."/>
            <person name="Shen H."/>
            <person name="Shue B.C."/>
            <person name="Siden-Kiamos I."/>
            <person name="Simpson M."/>
            <person name="Skupski M.P."/>
            <person name="Smith T.J."/>
            <person name="Spier E."/>
            <person name="Spradling A.C."/>
            <person name="Stapleton M."/>
            <person name="Strong R."/>
            <person name="Sun E."/>
            <person name="Svirskas R."/>
            <person name="Tector C."/>
            <person name="Turner R."/>
            <person name="Venter E."/>
            <person name="Wang A.H."/>
            <person name="Wang X."/>
            <person name="Wang Z.-Y."/>
            <person name="Wassarman D.A."/>
            <person name="Weinstock G.M."/>
            <person name="Weissenbach J."/>
            <person name="Williams S.M."/>
            <person name="Woodage T."/>
            <person name="Worley K.C."/>
            <person name="Wu D."/>
            <person name="Yang S."/>
            <person name="Yao Q.A."/>
            <person name="Ye J."/>
            <person name="Yeh R.-F."/>
            <person name="Zaveri J.S."/>
            <person name="Zhan M."/>
            <person name="Zhang G."/>
            <person name="Zhao Q."/>
            <person name="Zheng L."/>
            <person name="Zheng X.H."/>
            <person name="Zhong F.N."/>
            <person name="Zhong W."/>
            <person name="Zhou X."/>
            <person name="Zhu S.C."/>
            <person name="Zhu X."/>
            <person name="Smith H.O."/>
            <person name="Gibbs R.A."/>
            <person name="Myers E.W."/>
            <person name="Rubin G.M."/>
            <person name="Venter J.C."/>
        </authorList>
    </citation>
    <scope>NUCLEOTIDE SEQUENCE [LARGE SCALE GENOMIC DNA]</scope>
    <source>
        <strain>Berkeley</strain>
    </source>
</reference>
<reference key="3">
    <citation type="journal article" date="2002" name="Genome Biol.">
        <title>Annotation of the Drosophila melanogaster euchromatic genome: a systematic review.</title>
        <authorList>
            <person name="Misra S."/>
            <person name="Crosby M.A."/>
            <person name="Mungall C.J."/>
            <person name="Matthews B.B."/>
            <person name="Campbell K.S."/>
            <person name="Hradecky P."/>
            <person name="Huang Y."/>
            <person name="Kaminker J.S."/>
            <person name="Millburn G.H."/>
            <person name="Prochnik S.E."/>
            <person name="Smith C.D."/>
            <person name="Tupy J.L."/>
            <person name="Whitfield E.J."/>
            <person name="Bayraktaroglu L."/>
            <person name="Berman B.P."/>
            <person name="Bettencourt B.R."/>
            <person name="Celniker S.E."/>
            <person name="de Grey A.D.N.J."/>
            <person name="Drysdale R.A."/>
            <person name="Harris N.L."/>
            <person name="Richter J."/>
            <person name="Russo S."/>
            <person name="Schroeder A.J."/>
            <person name="Shu S.Q."/>
            <person name="Stapleton M."/>
            <person name="Yamada C."/>
            <person name="Ashburner M."/>
            <person name="Gelbart W.M."/>
            <person name="Rubin G.M."/>
            <person name="Lewis S.E."/>
        </authorList>
    </citation>
    <scope>GENOME REANNOTATION</scope>
    <source>
        <strain>Berkeley</strain>
    </source>
</reference>
<reference key="4">
    <citation type="submission" date="2003-02" db="EMBL/GenBank/DDBJ databases">
        <authorList>
            <person name="Stapleton M."/>
            <person name="Brokstein P."/>
            <person name="Hong L."/>
            <person name="Agbayani A."/>
            <person name="Carlson J.W."/>
            <person name="Champe M."/>
            <person name="Chavez C."/>
            <person name="Dorsett V."/>
            <person name="Dresnek D."/>
            <person name="Farfan D."/>
            <person name="Frise E."/>
            <person name="George R.A."/>
            <person name="Gonzalez M."/>
            <person name="Guarin H."/>
            <person name="Kronmiller B."/>
            <person name="Li P.W."/>
            <person name="Liao G."/>
            <person name="Miranda A."/>
            <person name="Mungall C.J."/>
            <person name="Nunoo J."/>
            <person name="Pacleb J.M."/>
            <person name="Paragas V."/>
            <person name="Park S."/>
            <person name="Patel S."/>
            <person name="Phouanenavong S."/>
            <person name="Wan K.H."/>
            <person name="Yu C."/>
            <person name="Lewis S.E."/>
            <person name="Rubin G.M."/>
            <person name="Celniker S.E."/>
        </authorList>
    </citation>
    <scope>NUCLEOTIDE SEQUENCE [LARGE SCALE MRNA]</scope>
    <source>
        <strain>Berkeley</strain>
        <tissue>Head</tissue>
    </source>
</reference>
<reference key="5">
    <citation type="journal article" date="2001" name="J. Biol. Chem.">
        <title>The second PDZ domain of INAD is a type I domain involved in binding to eye protein kinase C. Mutational analysis and naturally occurring variants.</title>
        <authorList>
            <person name="Kumar R."/>
            <person name="Shieh B.-H."/>
        </authorList>
    </citation>
    <scope>MUTAGENESIS OF ILE-697</scope>
    <scope>INTERACTION WITH INAD</scope>
</reference>
<reference key="6">
    <citation type="journal article" date="2015" name="Cell Host Microbe">
        <title>Bacterial uracil modulates Drosophila DUOX-dependent gut immunity via Hedgehog-induced signaling endosomes.</title>
        <authorList>
            <person name="Lee K.A."/>
            <person name="Kim B."/>
            <person name="Bhin J."/>
            <person name="Kim D.H."/>
            <person name="You H."/>
            <person name="Kim E.K."/>
            <person name="Kim S.H."/>
            <person name="Ryu J.H."/>
            <person name="Hwang D."/>
            <person name="Lee W.J."/>
        </authorList>
    </citation>
    <scope>FUNCTION</scope>
    <scope>INDUCTION BY BACTERIAL URACIL</scope>
</reference>
<dbReference type="EC" id="2.7.11.13"/>
<dbReference type="EMBL" id="J04845">
    <property type="protein sequence ID" value="AAA28817.1"/>
    <property type="molecule type" value="mRNA"/>
</dbReference>
<dbReference type="EMBL" id="AE013599">
    <property type="protein sequence ID" value="AAF57934.1"/>
    <property type="molecule type" value="Genomic_DNA"/>
</dbReference>
<dbReference type="EMBL" id="BT004495">
    <property type="protein sequence ID" value="AAO42659.1"/>
    <property type="molecule type" value="mRNA"/>
</dbReference>
<dbReference type="PIR" id="A32392">
    <property type="entry name" value="A32392"/>
</dbReference>
<dbReference type="RefSeq" id="NP_476863.1">
    <property type="nucleotide sequence ID" value="NM_057515.3"/>
</dbReference>
<dbReference type="SMR" id="P13677"/>
<dbReference type="BioGRID" id="62602">
    <property type="interactions" value="7"/>
</dbReference>
<dbReference type="DIP" id="DIP-54N"/>
<dbReference type="FunCoup" id="P13677">
    <property type="interactions" value="257"/>
</dbReference>
<dbReference type="IntAct" id="P13677">
    <property type="interactions" value="6"/>
</dbReference>
<dbReference type="STRING" id="7227.FBpp0086196"/>
<dbReference type="GlyGen" id="P13677">
    <property type="glycosylation" value="1 site"/>
</dbReference>
<dbReference type="PaxDb" id="7227-FBpp0086196"/>
<dbReference type="DNASU" id="36897"/>
<dbReference type="EnsemblMetazoa" id="FBtr0087047">
    <property type="protein sequence ID" value="FBpp0086196"/>
    <property type="gene ID" value="FBgn0004784"/>
</dbReference>
<dbReference type="GeneID" id="36897"/>
<dbReference type="KEGG" id="dme:Dmel_CG6518"/>
<dbReference type="AGR" id="FB:FBgn0004784"/>
<dbReference type="CTD" id="36897"/>
<dbReference type="FlyBase" id="FBgn0004784">
    <property type="gene designation" value="inaC"/>
</dbReference>
<dbReference type="VEuPathDB" id="VectorBase:FBgn0004784"/>
<dbReference type="eggNOG" id="KOG0696">
    <property type="taxonomic scope" value="Eukaryota"/>
</dbReference>
<dbReference type="GeneTree" id="ENSGT00940000167637"/>
<dbReference type="HOGENOM" id="CLU_000288_54_2_1"/>
<dbReference type="InParanoid" id="P13677"/>
<dbReference type="OMA" id="ACEMEPP"/>
<dbReference type="OrthoDB" id="63267at2759"/>
<dbReference type="PhylomeDB" id="P13677"/>
<dbReference type="Reactome" id="R-DME-111933">
    <property type="pathway name" value="Calmodulin induced events"/>
</dbReference>
<dbReference type="Reactome" id="R-DME-114516">
    <property type="pathway name" value="Disinhibition of SNARE formation"/>
</dbReference>
<dbReference type="Reactome" id="R-DME-1169091">
    <property type="pathway name" value="Activation of NF-kappaB in B cells"/>
</dbReference>
<dbReference type="Reactome" id="R-DME-416993">
    <property type="pathway name" value="Trafficking of GluR2-containing AMPA receptors"/>
</dbReference>
<dbReference type="Reactome" id="R-DME-4419969">
    <property type="pathway name" value="Depolymerization of the Nuclear Lamina"/>
</dbReference>
<dbReference type="Reactome" id="R-DME-5218921">
    <property type="pathway name" value="VEGFR2 mediated cell proliferation"/>
</dbReference>
<dbReference type="Reactome" id="R-DME-76005">
    <property type="pathway name" value="Response to elevated platelet cytosolic Ca2+"/>
</dbReference>
<dbReference type="SignaLink" id="P13677"/>
<dbReference type="BioGRID-ORCS" id="36897">
    <property type="hits" value="0 hits in 3 CRISPR screens"/>
</dbReference>
<dbReference type="GenomeRNAi" id="36897"/>
<dbReference type="PRO" id="PR:P13677"/>
<dbReference type="Proteomes" id="UP000000803">
    <property type="component" value="Chromosome 2R"/>
</dbReference>
<dbReference type="Bgee" id="FBgn0004784">
    <property type="expression patterns" value="Expressed in outer photoreceptor cell (Drosophila) in insect head and 45 other cell types or tissues"/>
</dbReference>
<dbReference type="GO" id="GO:0016027">
    <property type="term" value="C:inaD signaling complex"/>
    <property type="evidence" value="ECO:0000304"/>
    <property type="project" value="FlyBase"/>
</dbReference>
<dbReference type="GO" id="GO:0016028">
    <property type="term" value="C:rhabdomere"/>
    <property type="evidence" value="ECO:0000314"/>
    <property type="project" value="FlyBase"/>
</dbReference>
<dbReference type="GO" id="GO:0005524">
    <property type="term" value="F:ATP binding"/>
    <property type="evidence" value="ECO:0007669"/>
    <property type="project" value="UniProtKB-KW"/>
</dbReference>
<dbReference type="GO" id="GO:0004698">
    <property type="term" value="F:calcium,diacylglycerol-dependent serine/threonine kinase activity"/>
    <property type="evidence" value="ECO:0000250"/>
    <property type="project" value="FlyBase"/>
</dbReference>
<dbReference type="GO" id="GO:0106310">
    <property type="term" value="F:protein serine kinase activity"/>
    <property type="evidence" value="ECO:0007669"/>
    <property type="project" value="RHEA"/>
</dbReference>
<dbReference type="GO" id="GO:0004674">
    <property type="term" value="F:protein serine/threonine kinase activity"/>
    <property type="evidence" value="ECO:0000318"/>
    <property type="project" value="GO_Central"/>
</dbReference>
<dbReference type="GO" id="GO:0008270">
    <property type="term" value="F:zinc ion binding"/>
    <property type="evidence" value="ECO:0007669"/>
    <property type="project" value="UniProtKB-KW"/>
</dbReference>
<dbReference type="GO" id="GO:0019722">
    <property type="term" value="P:calcium-mediated signaling"/>
    <property type="evidence" value="ECO:0000304"/>
    <property type="project" value="FlyBase"/>
</dbReference>
<dbReference type="GO" id="GO:0016477">
    <property type="term" value="P:cell migration"/>
    <property type="evidence" value="ECO:0000315"/>
    <property type="project" value="FlyBase"/>
</dbReference>
<dbReference type="GO" id="GO:0050962">
    <property type="term" value="P:detection of light stimulus involved in sensory perception"/>
    <property type="evidence" value="ECO:0000315"/>
    <property type="project" value="FlyBase"/>
</dbReference>
<dbReference type="GO" id="GO:0008585">
    <property type="term" value="P:female gonad development"/>
    <property type="evidence" value="ECO:0000315"/>
    <property type="project" value="FlyBase"/>
</dbReference>
<dbReference type="GO" id="GO:0035556">
    <property type="term" value="P:intracellular signal transduction"/>
    <property type="evidence" value="ECO:0000318"/>
    <property type="project" value="GO_Central"/>
</dbReference>
<dbReference type="GO" id="GO:0016059">
    <property type="term" value="P:negative regulation of opsin-mediated signaling pathway"/>
    <property type="evidence" value="ECO:0000315"/>
    <property type="project" value="FlyBase"/>
</dbReference>
<dbReference type="GO" id="GO:0030845">
    <property type="term" value="P:phospholipase C-inhibiting G protein-coupled receptor signaling pathway"/>
    <property type="evidence" value="ECO:0000315"/>
    <property type="project" value="FlyBase"/>
</dbReference>
<dbReference type="GO" id="GO:0007602">
    <property type="term" value="P:phototransduction"/>
    <property type="evidence" value="ECO:0000316"/>
    <property type="project" value="FlyBase"/>
</dbReference>
<dbReference type="GO" id="GO:2000370">
    <property type="term" value="P:positive regulation of clathrin-dependent endocytosis"/>
    <property type="evidence" value="ECO:0000316"/>
    <property type="project" value="FlyBase"/>
</dbReference>
<dbReference type="GO" id="GO:0045471">
    <property type="term" value="P:response to ethanol"/>
    <property type="evidence" value="ECO:0000314"/>
    <property type="project" value="FlyBase"/>
</dbReference>
<dbReference type="GO" id="GO:0009416">
    <property type="term" value="P:response to light stimulus"/>
    <property type="evidence" value="ECO:0000315"/>
    <property type="project" value="FlyBase"/>
</dbReference>
<dbReference type="GO" id="GO:0007601">
    <property type="term" value="P:visual perception"/>
    <property type="evidence" value="ECO:0007669"/>
    <property type="project" value="UniProtKB-KW"/>
</dbReference>
<dbReference type="CDD" id="cd20792">
    <property type="entry name" value="C1_cPKC_nPKC_rpt1"/>
    <property type="match status" value="1"/>
</dbReference>
<dbReference type="CDD" id="cd04026">
    <property type="entry name" value="C2_PKC_alpha_gamma"/>
    <property type="match status" value="1"/>
</dbReference>
<dbReference type="CDD" id="cd05570">
    <property type="entry name" value="STKc_PKC"/>
    <property type="match status" value="1"/>
</dbReference>
<dbReference type="FunFam" id="1.10.510.10:FF:001160">
    <property type="entry name" value="Protein kinase C"/>
    <property type="match status" value="1"/>
</dbReference>
<dbReference type="FunFam" id="2.60.40.150:FF:000218">
    <property type="entry name" value="Protein kinase C"/>
    <property type="match status" value="1"/>
</dbReference>
<dbReference type="FunFam" id="3.30.200.20:FF:000080">
    <property type="entry name" value="Protein kinase C"/>
    <property type="match status" value="1"/>
</dbReference>
<dbReference type="FunFam" id="3.30.60.20:FF:000071">
    <property type="entry name" value="Protein kinase C"/>
    <property type="match status" value="1"/>
</dbReference>
<dbReference type="Gene3D" id="3.30.60.20">
    <property type="match status" value="2"/>
</dbReference>
<dbReference type="Gene3D" id="2.60.40.150">
    <property type="entry name" value="C2 domain"/>
    <property type="match status" value="1"/>
</dbReference>
<dbReference type="Gene3D" id="3.30.200.20">
    <property type="entry name" value="Phosphorylase Kinase, domain 1"/>
    <property type="match status" value="1"/>
</dbReference>
<dbReference type="Gene3D" id="1.10.510.10">
    <property type="entry name" value="Transferase(Phosphotransferase) domain 1"/>
    <property type="match status" value="1"/>
</dbReference>
<dbReference type="InterPro" id="IPR000961">
    <property type="entry name" value="AGC-kinase_C"/>
</dbReference>
<dbReference type="InterPro" id="IPR046349">
    <property type="entry name" value="C1-like_sf"/>
</dbReference>
<dbReference type="InterPro" id="IPR000008">
    <property type="entry name" value="C2_dom"/>
</dbReference>
<dbReference type="InterPro" id="IPR035892">
    <property type="entry name" value="C2_domain_sf"/>
</dbReference>
<dbReference type="InterPro" id="IPR020454">
    <property type="entry name" value="DAG/PE-bd"/>
</dbReference>
<dbReference type="InterPro" id="IPR011009">
    <property type="entry name" value="Kinase-like_dom_sf"/>
</dbReference>
<dbReference type="InterPro" id="IPR002219">
    <property type="entry name" value="PE/DAG-bd"/>
</dbReference>
<dbReference type="InterPro" id="IPR017892">
    <property type="entry name" value="Pkinase_C"/>
</dbReference>
<dbReference type="InterPro" id="IPR000719">
    <property type="entry name" value="Prot_kinase_dom"/>
</dbReference>
<dbReference type="InterPro" id="IPR017441">
    <property type="entry name" value="Protein_kinase_ATP_BS"/>
</dbReference>
<dbReference type="InterPro" id="IPR014375">
    <property type="entry name" value="Protein_kinase_C_a/b/g"/>
</dbReference>
<dbReference type="InterPro" id="IPR008271">
    <property type="entry name" value="Ser/Thr_kinase_AS"/>
</dbReference>
<dbReference type="PANTHER" id="PTHR24351">
    <property type="entry name" value="RIBOSOMAL PROTEIN S6 KINASE"/>
    <property type="match status" value="1"/>
</dbReference>
<dbReference type="Pfam" id="PF00130">
    <property type="entry name" value="C1_1"/>
    <property type="match status" value="2"/>
</dbReference>
<dbReference type="Pfam" id="PF00168">
    <property type="entry name" value="C2"/>
    <property type="match status" value="1"/>
</dbReference>
<dbReference type="Pfam" id="PF00069">
    <property type="entry name" value="Pkinase"/>
    <property type="match status" value="1"/>
</dbReference>
<dbReference type="Pfam" id="PF00433">
    <property type="entry name" value="Pkinase_C"/>
    <property type="match status" value="1"/>
</dbReference>
<dbReference type="PIRSF" id="PIRSF000550">
    <property type="entry name" value="PKC_alpha"/>
    <property type="match status" value="1"/>
</dbReference>
<dbReference type="PRINTS" id="PR00360">
    <property type="entry name" value="C2DOMAIN"/>
</dbReference>
<dbReference type="PRINTS" id="PR00008">
    <property type="entry name" value="DAGPEDOMAIN"/>
</dbReference>
<dbReference type="SMART" id="SM00109">
    <property type="entry name" value="C1"/>
    <property type="match status" value="2"/>
</dbReference>
<dbReference type="SMART" id="SM00239">
    <property type="entry name" value="C2"/>
    <property type="match status" value="1"/>
</dbReference>
<dbReference type="SMART" id="SM00133">
    <property type="entry name" value="S_TK_X"/>
    <property type="match status" value="1"/>
</dbReference>
<dbReference type="SMART" id="SM00220">
    <property type="entry name" value="S_TKc"/>
    <property type="match status" value="1"/>
</dbReference>
<dbReference type="SUPFAM" id="SSF49562">
    <property type="entry name" value="C2 domain (Calcium/lipid-binding domain, CaLB)"/>
    <property type="match status" value="1"/>
</dbReference>
<dbReference type="SUPFAM" id="SSF57889">
    <property type="entry name" value="Cysteine-rich domain"/>
    <property type="match status" value="2"/>
</dbReference>
<dbReference type="SUPFAM" id="SSF56112">
    <property type="entry name" value="Protein kinase-like (PK-like)"/>
    <property type="match status" value="1"/>
</dbReference>
<dbReference type="PROSITE" id="PS51285">
    <property type="entry name" value="AGC_KINASE_CTER"/>
    <property type="match status" value="1"/>
</dbReference>
<dbReference type="PROSITE" id="PS50004">
    <property type="entry name" value="C2"/>
    <property type="match status" value="1"/>
</dbReference>
<dbReference type="PROSITE" id="PS00107">
    <property type="entry name" value="PROTEIN_KINASE_ATP"/>
    <property type="match status" value="1"/>
</dbReference>
<dbReference type="PROSITE" id="PS50011">
    <property type="entry name" value="PROTEIN_KINASE_DOM"/>
    <property type="match status" value="1"/>
</dbReference>
<dbReference type="PROSITE" id="PS00108">
    <property type="entry name" value="PROTEIN_KINASE_ST"/>
    <property type="match status" value="1"/>
</dbReference>
<dbReference type="PROSITE" id="PS00479">
    <property type="entry name" value="ZF_DAG_PE_1"/>
    <property type="match status" value="2"/>
</dbReference>
<dbReference type="PROSITE" id="PS50081">
    <property type="entry name" value="ZF_DAG_PE_2"/>
    <property type="match status" value="2"/>
</dbReference>
<keyword id="KW-0067">ATP-binding</keyword>
<keyword id="KW-0106">Calcium</keyword>
<keyword id="KW-0418">Kinase</keyword>
<keyword id="KW-0479">Metal-binding</keyword>
<keyword id="KW-0547">Nucleotide-binding</keyword>
<keyword id="KW-0597">Phosphoprotein</keyword>
<keyword id="KW-1185">Reference proteome</keyword>
<keyword id="KW-0677">Repeat</keyword>
<keyword id="KW-0716">Sensory transduction</keyword>
<keyword id="KW-0723">Serine/threonine-protein kinase</keyword>
<keyword id="KW-0808">Transferase</keyword>
<keyword id="KW-0844">Vision</keyword>
<keyword id="KW-0862">Zinc</keyword>
<keyword id="KW-0863">Zinc-finger</keyword>
<gene>
    <name type="primary">inaC</name>
    <name type="synonym">PKC2</name>
    <name type="ORF">CG6518</name>
</gene>
<feature type="chain" id="PRO_0000055731" description="Protein kinase C, eye isozyme">
    <location>
        <begin position="1"/>
        <end position="700"/>
    </location>
</feature>
<feature type="domain" description="C2" evidence="1">
    <location>
        <begin position="189"/>
        <end position="310"/>
    </location>
</feature>
<feature type="domain" description="Protein kinase" evidence="2">
    <location>
        <begin position="371"/>
        <end position="629"/>
    </location>
</feature>
<feature type="domain" description="AGC-kinase C-terminal" evidence="4">
    <location>
        <begin position="630"/>
        <end position="700"/>
    </location>
</feature>
<feature type="zinc finger region" description="Phorbol-ester/DAG-type 1" evidence="3">
    <location>
        <begin position="71"/>
        <end position="121"/>
    </location>
</feature>
<feature type="zinc finger region" description="Phorbol-ester/DAG-type 2" evidence="3">
    <location>
        <begin position="136"/>
        <end position="186"/>
    </location>
</feature>
<feature type="active site" description="Proton acceptor" evidence="2 5">
    <location>
        <position position="495"/>
    </location>
</feature>
<feature type="binding site" evidence="1">
    <location>
        <position position="222"/>
    </location>
    <ligand>
        <name>Ca(2+)</name>
        <dbReference type="ChEBI" id="CHEBI:29108"/>
        <label>1</label>
    </ligand>
</feature>
<feature type="binding site" evidence="1">
    <location>
        <position position="222"/>
    </location>
    <ligand>
        <name>Ca(2+)</name>
        <dbReference type="ChEBI" id="CHEBI:29108"/>
        <label>2</label>
    </ligand>
</feature>
<feature type="binding site" evidence="1">
    <location>
        <position position="228"/>
    </location>
    <ligand>
        <name>Ca(2+)</name>
        <dbReference type="ChEBI" id="CHEBI:29108"/>
        <label>1</label>
    </ligand>
</feature>
<feature type="binding site" evidence="1">
    <location>
        <position position="281"/>
    </location>
    <ligand>
        <name>Ca(2+)</name>
        <dbReference type="ChEBI" id="CHEBI:29108"/>
        <label>1</label>
    </ligand>
</feature>
<feature type="binding site" evidence="1">
    <location>
        <position position="281"/>
    </location>
    <ligand>
        <name>Ca(2+)</name>
        <dbReference type="ChEBI" id="CHEBI:29108"/>
        <label>2</label>
    </ligand>
</feature>
<feature type="binding site" evidence="1">
    <location>
        <position position="283"/>
    </location>
    <ligand>
        <name>Ca(2+)</name>
        <dbReference type="ChEBI" id="CHEBI:29108"/>
        <label>1</label>
    </ligand>
</feature>
<feature type="binding site" evidence="1">
    <location>
        <position position="283"/>
    </location>
    <ligand>
        <name>Ca(2+)</name>
        <dbReference type="ChEBI" id="CHEBI:29108"/>
        <label>2</label>
    </ligand>
</feature>
<feature type="binding site" evidence="1">
    <location>
        <position position="283"/>
    </location>
    <ligand>
        <name>Ca(2+)</name>
        <dbReference type="ChEBI" id="CHEBI:29108"/>
        <label>3</label>
    </ligand>
</feature>
<feature type="binding site" evidence="1">
    <location>
        <position position="286"/>
    </location>
    <ligand>
        <name>Ca(2+)</name>
        <dbReference type="ChEBI" id="CHEBI:29108"/>
        <label>3</label>
    </ligand>
</feature>
<feature type="binding site" evidence="1">
    <location>
        <position position="289"/>
    </location>
    <ligand>
        <name>Ca(2+)</name>
        <dbReference type="ChEBI" id="CHEBI:29108"/>
        <label>2</label>
    </ligand>
</feature>
<feature type="binding site" evidence="1">
    <location>
        <position position="289"/>
    </location>
    <ligand>
        <name>Ca(2+)</name>
        <dbReference type="ChEBI" id="CHEBI:29108"/>
        <label>3</label>
    </ligand>
</feature>
<feature type="binding site" evidence="2">
    <location>
        <begin position="377"/>
        <end position="385"/>
    </location>
    <ligand>
        <name>ATP</name>
        <dbReference type="ChEBI" id="CHEBI:30616"/>
    </ligand>
</feature>
<feature type="binding site" evidence="2">
    <location>
        <position position="400"/>
    </location>
    <ligand>
        <name>ATP</name>
        <dbReference type="ChEBI" id="CHEBI:30616"/>
    </ligand>
</feature>
<feature type="mutagenesis site" description="No interaction with inaD." evidence="6">
    <original>I</original>
    <variation>E</variation>
    <location>
        <position position="697"/>
    </location>
</feature>
<feature type="mutagenesis site" description="90% reduced interaction with inaD." evidence="6">
    <original>I</original>
    <variation>K</variation>
    <location>
        <position position="697"/>
    </location>
</feature>
<sequence>MAAAAVATPGATVLPPSVPSAAPGAKAPAAGAGKGPGNLLEITGEANIVNYMKNRLRKGAMKRKGLEMVNGHRFGVRFFKNPTYCGHCKDFIWGFGKQGFQCEECRFNIHQKCCKFVVFKCPGKDTDFDADCAKVKHGWISTTYTTPTFCDECGLLLHGVAHQGVKCENCNLNVHHACQETVPPMCGADISEVRGKLLLYVELKGNNLKVDIKEAANLIPMDTNGFSDPYIAVQMHPDRSGRTKKKTKTIQKNLNPVFNETFTFELQPQDRDKRLLIEVWDWDRTSRNDFMGSFSFSLEELQKEPVDGWYKFLSQVEGEHYNIPCVDAFNDIARLRDEVRHDRRPNEKRRMDNKDMPHNMSKRDMIRAADFNFVKVIGKGSFGKVLLAERRGTDELYAVKVLRKDVIIQTDDMELPMNEKKILALSGRPPFLVSMHSCFQTMDRLFFVMEYCKGGDLMYHMQQYGRFKESVAIFYAVEVAIALFFLHERDIIYRDLKLDNILLDGEGHVKLVDFGLSKEGVTERQTTRTFCGTPNYMAPEIVSYDPYSIAADWWSFGVLLFEFMAGQAPFEGDDETTVFRNIKDKKAVFPKHFSVEAMDIITSFLTKKPNNRLGAGRYARQEITTHPFFRNVDWDKAEACEMEPPIKPMIKHRKDISNFDDAFTKEKTDLTPTDKLFMMNLDQNDFIGFSFMNPEFITII</sequence>
<proteinExistence type="evidence at protein level"/>
<protein>
    <recommendedName>
        <fullName>Protein kinase C, eye isozyme</fullName>
        <ecNumber>2.7.11.13</ecNumber>
    </recommendedName>
    <alternativeName>
        <fullName>Eye-PKC</fullName>
    </alternativeName>
    <alternativeName>
        <fullName>Inactivation no after-potential C protein</fullName>
        <shortName>Protein INAC</shortName>
    </alternativeName>
    <alternativeName>
        <fullName>Photoreceptor-specific PKC</fullName>
    </alternativeName>
    <alternativeName>
        <fullName>dPKC53E(EY)</fullName>
    </alternativeName>
</protein>
<evidence type="ECO:0000255" key="1">
    <source>
        <dbReference type="PROSITE-ProRule" id="PRU00041"/>
    </source>
</evidence>
<evidence type="ECO:0000255" key="2">
    <source>
        <dbReference type="PROSITE-ProRule" id="PRU00159"/>
    </source>
</evidence>
<evidence type="ECO:0000255" key="3">
    <source>
        <dbReference type="PROSITE-ProRule" id="PRU00226"/>
    </source>
</evidence>
<evidence type="ECO:0000255" key="4">
    <source>
        <dbReference type="PROSITE-ProRule" id="PRU00618"/>
    </source>
</evidence>
<evidence type="ECO:0000255" key="5">
    <source>
        <dbReference type="PROSITE-ProRule" id="PRU10027"/>
    </source>
</evidence>
<evidence type="ECO:0000269" key="6">
    <source>
    </source>
</evidence>
<evidence type="ECO:0000269" key="7">
    <source>
    </source>
</evidence>
<evidence type="ECO:0000269" key="8">
    <source>
    </source>
</evidence>
<evidence type="ECO:0000305" key="9"/>
<comment type="function">
    <text evidence="7">This is a calcium-activated, phospholipid-dependent, serine- and threonine-specific enzyme. This isozyme is a negative regulator of the visual transduction cascade and has been shown to be required for photoreceptor cell inactivation and light adaptation. Negative regulation is dependent on interaction with scaffolding protein inaD. Acts in a hh-signaling pathway which regulates the Duox-dependent gut immune response to bacterial uracil; required for the activation of Cad99C and consequently Cad99C-dependent endosome formation, which is essential for the Duox-dependent production of reactive oxygen species (ROS) in response to intestinal bacterial infection (PubMed:25639794).</text>
</comment>
<comment type="catalytic activity">
    <reaction>
        <text>L-seryl-[protein] + ATP = O-phospho-L-seryl-[protein] + ADP + H(+)</text>
        <dbReference type="Rhea" id="RHEA:17989"/>
        <dbReference type="Rhea" id="RHEA-COMP:9863"/>
        <dbReference type="Rhea" id="RHEA-COMP:11604"/>
        <dbReference type="ChEBI" id="CHEBI:15378"/>
        <dbReference type="ChEBI" id="CHEBI:29999"/>
        <dbReference type="ChEBI" id="CHEBI:30616"/>
        <dbReference type="ChEBI" id="CHEBI:83421"/>
        <dbReference type="ChEBI" id="CHEBI:456216"/>
        <dbReference type="EC" id="2.7.11.13"/>
    </reaction>
</comment>
<comment type="catalytic activity">
    <reaction>
        <text>L-threonyl-[protein] + ATP = O-phospho-L-threonyl-[protein] + ADP + H(+)</text>
        <dbReference type="Rhea" id="RHEA:46608"/>
        <dbReference type="Rhea" id="RHEA-COMP:11060"/>
        <dbReference type="Rhea" id="RHEA-COMP:11605"/>
        <dbReference type="ChEBI" id="CHEBI:15378"/>
        <dbReference type="ChEBI" id="CHEBI:30013"/>
        <dbReference type="ChEBI" id="CHEBI:30616"/>
        <dbReference type="ChEBI" id="CHEBI:61977"/>
        <dbReference type="ChEBI" id="CHEBI:456216"/>
        <dbReference type="EC" id="2.7.11.13"/>
    </reaction>
</comment>
<comment type="cofactor">
    <cofactor evidence="1">
        <name>Ca(2+)</name>
        <dbReference type="ChEBI" id="CHEBI:29108"/>
    </cofactor>
    <text evidence="1">Binds 3 Ca(2+) ions per C2 domain.</text>
</comment>
<comment type="interaction">
    <interactant intactId="EBI-130595">
        <id>P13677</id>
    </interactant>
    <interactant intactId="EBI-195326">
        <id>Q24008</id>
        <label>inaD</label>
    </interactant>
    <organismsDiffer>false</organismsDiffer>
    <experiments>2</experiments>
</comment>
<comment type="tissue specificity">
    <text evidence="8">Exclusively expressed in photoreceptor cells.</text>
</comment>
<comment type="developmental stage">
    <text evidence="8">Expression primarily in adults.</text>
</comment>
<comment type="induction">
    <text evidence="7">Up-regulated in the midgut epithelium in response to bacterial uracil.</text>
</comment>
<comment type="domain">
    <text>Tetrapeptide ligand at C-terminus is tethered to inaD by interaction with the second PDZ domain.</text>
</comment>
<comment type="similarity">
    <text evidence="9">Belongs to the protein kinase superfamily. AGC Ser/Thr protein kinase family. PKC subfamily.</text>
</comment>